<keyword id="KW-1003">Cell membrane</keyword>
<keyword id="KW-0342">GTP-binding</keyword>
<keyword id="KW-0378">Hydrolase</keyword>
<keyword id="KW-0472">Membrane</keyword>
<keyword id="KW-0547">Nucleotide-binding</keyword>
<keyword id="KW-0648">Protein biosynthesis</keyword>
<name>LEPA_PAEAT</name>
<accession>A1R6W8</accession>
<reference key="1">
    <citation type="journal article" date="2006" name="PLoS Genet.">
        <title>Secrets of soil survival revealed by the genome sequence of Arthrobacter aurescens TC1.</title>
        <authorList>
            <person name="Mongodin E.F."/>
            <person name="Shapir N."/>
            <person name="Daugherty S.C."/>
            <person name="DeBoy R.T."/>
            <person name="Emerson J.B."/>
            <person name="Shvartzbeyn A."/>
            <person name="Radune D."/>
            <person name="Vamathevan J."/>
            <person name="Riggs F."/>
            <person name="Grinberg V."/>
            <person name="Khouri H.M."/>
            <person name="Wackett L.P."/>
            <person name="Nelson K.E."/>
            <person name="Sadowsky M.J."/>
        </authorList>
    </citation>
    <scope>NUCLEOTIDE SEQUENCE [LARGE SCALE GENOMIC DNA]</scope>
    <source>
        <strain>TC1</strain>
    </source>
</reference>
<dbReference type="EC" id="3.6.5.n1" evidence="1"/>
<dbReference type="EMBL" id="CP000474">
    <property type="protein sequence ID" value="ABM08731.1"/>
    <property type="molecule type" value="Genomic_DNA"/>
</dbReference>
<dbReference type="SMR" id="A1R6W8"/>
<dbReference type="STRING" id="290340.AAur_2239"/>
<dbReference type="KEGG" id="aau:AAur_2239"/>
<dbReference type="eggNOG" id="COG0481">
    <property type="taxonomic scope" value="Bacteria"/>
</dbReference>
<dbReference type="HOGENOM" id="CLU_009995_3_3_11"/>
<dbReference type="Proteomes" id="UP000000637">
    <property type="component" value="Chromosome"/>
</dbReference>
<dbReference type="GO" id="GO:0005886">
    <property type="term" value="C:plasma membrane"/>
    <property type="evidence" value="ECO:0007669"/>
    <property type="project" value="UniProtKB-SubCell"/>
</dbReference>
<dbReference type="GO" id="GO:0005525">
    <property type="term" value="F:GTP binding"/>
    <property type="evidence" value="ECO:0007669"/>
    <property type="project" value="UniProtKB-UniRule"/>
</dbReference>
<dbReference type="GO" id="GO:0003924">
    <property type="term" value="F:GTPase activity"/>
    <property type="evidence" value="ECO:0007669"/>
    <property type="project" value="UniProtKB-UniRule"/>
</dbReference>
<dbReference type="GO" id="GO:0043022">
    <property type="term" value="F:ribosome binding"/>
    <property type="evidence" value="ECO:0007669"/>
    <property type="project" value="UniProtKB-UniRule"/>
</dbReference>
<dbReference type="GO" id="GO:0003746">
    <property type="term" value="F:translation elongation factor activity"/>
    <property type="evidence" value="ECO:0007669"/>
    <property type="project" value="UniProtKB-UniRule"/>
</dbReference>
<dbReference type="GO" id="GO:0045727">
    <property type="term" value="P:positive regulation of translation"/>
    <property type="evidence" value="ECO:0007669"/>
    <property type="project" value="UniProtKB-UniRule"/>
</dbReference>
<dbReference type="CDD" id="cd03699">
    <property type="entry name" value="EF4_II"/>
    <property type="match status" value="1"/>
</dbReference>
<dbReference type="CDD" id="cd16260">
    <property type="entry name" value="EF4_III"/>
    <property type="match status" value="1"/>
</dbReference>
<dbReference type="CDD" id="cd01890">
    <property type="entry name" value="LepA"/>
    <property type="match status" value="1"/>
</dbReference>
<dbReference type="CDD" id="cd03709">
    <property type="entry name" value="lepA_C"/>
    <property type="match status" value="1"/>
</dbReference>
<dbReference type="FunFam" id="3.40.50.300:FF:000078">
    <property type="entry name" value="Elongation factor 4"/>
    <property type="match status" value="1"/>
</dbReference>
<dbReference type="FunFam" id="2.40.30.10:FF:000015">
    <property type="entry name" value="Translation factor GUF1, mitochondrial"/>
    <property type="match status" value="1"/>
</dbReference>
<dbReference type="FunFam" id="3.30.70.240:FF:000007">
    <property type="entry name" value="Translation factor GUF1, mitochondrial"/>
    <property type="match status" value="1"/>
</dbReference>
<dbReference type="FunFam" id="3.30.70.2570:FF:000001">
    <property type="entry name" value="Translation factor GUF1, mitochondrial"/>
    <property type="match status" value="1"/>
</dbReference>
<dbReference type="FunFam" id="3.30.70.870:FF:000004">
    <property type="entry name" value="Translation factor GUF1, mitochondrial"/>
    <property type="match status" value="1"/>
</dbReference>
<dbReference type="Gene3D" id="3.30.70.240">
    <property type="match status" value="1"/>
</dbReference>
<dbReference type="Gene3D" id="3.30.70.2570">
    <property type="entry name" value="Elongation factor 4, C-terminal domain"/>
    <property type="match status" value="1"/>
</dbReference>
<dbReference type="Gene3D" id="3.30.70.870">
    <property type="entry name" value="Elongation Factor G (Translational Gtpase), domain 3"/>
    <property type="match status" value="1"/>
</dbReference>
<dbReference type="Gene3D" id="3.40.50.300">
    <property type="entry name" value="P-loop containing nucleotide triphosphate hydrolases"/>
    <property type="match status" value="1"/>
</dbReference>
<dbReference type="Gene3D" id="2.40.30.10">
    <property type="entry name" value="Translation factors"/>
    <property type="match status" value="1"/>
</dbReference>
<dbReference type="HAMAP" id="MF_00071">
    <property type="entry name" value="LepA"/>
    <property type="match status" value="1"/>
</dbReference>
<dbReference type="InterPro" id="IPR006297">
    <property type="entry name" value="EF-4"/>
</dbReference>
<dbReference type="InterPro" id="IPR035647">
    <property type="entry name" value="EFG_III/V"/>
</dbReference>
<dbReference type="InterPro" id="IPR000640">
    <property type="entry name" value="EFG_V-like"/>
</dbReference>
<dbReference type="InterPro" id="IPR004161">
    <property type="entry name" value="EFTu-like_2"/>
</dbReference>
<dbReference type="InterPro" id="IPR031157">
    <property type="entry name" value="G_TR_CS"/>
</dbReference>
<dbReference type="InterPro" id="IPR038363">
    <property type="entry name" value="LepA_C_sf"/>
</dbReference>
<dbReference type="InterPro" id="IPR013842">
    <property type="entry name" value="LepA_CTD"/>
</dbReference>
<dbReference type="InterPro" id="IPR035654">
    <property type="entry name" value="LepA_IV"/>
</dbReference>
<dbReference type="InterPro" id="IPR027417">
    <property type="entry name" value="P-loop_NTPase"/>
</dbReference>
<dbReference type="InterPro" id="IPR005225">
    <property type="entry name" value="Small_GTP-bd"/>
</dbReference>
<dbReference type="InterPro" id="IPR000795">
    <property type="entry name" value="T_Tr_GTP-bd_dom"/>
</dbReference>
<dbReference type="InterPro" id="IPR009000">
    <property type="entry name" value="Transl_B-barrel_sf"/>
</dbReference>
<dbReference type="NCBIfam" id="TIGR01393">
    <property type="entry name" value="lepA"/>
    <property type="match status" value="1"/>
</dbReference>
<dbReference type="NCBIfam" id="TIGR00231">
    <property type="entry name" value="small_GTP"/>
    <property type="match status" value="1"/>
</dbReference>
<dbReference type="PANTHER" id="PTHR43512:SF4">
    <property type="entry name" value="TRANSLATION FACTOR GUF1 HOMOLOG, CHLOROPLASTIC"/>
    <property type="match status" value="1"/>
</dbReference>
<dbReference type="PANTHER" id="PTHR43512">
    <property type="entry name" value="TRANSLATION FACTOR GUF1-RELATED"/>
    <property type="match status" value="1"/>
</dbReference>
<dbReference type="Pfam" id="PF00679">
    <property type="entry name" value="EFG_C"/>
    <property type="match status" value="1"/>
</dbReference>
<dbReference type="Pfam" id="PF00009">
    <property type="entry name" value="GTP_EFTU"/>
    <property type="match status" value="1"/>
</dbReference>
<dbReference type="Pfam" id="PF03144">
    <property type="entry name" value="GTP_EFTU_D2"/>
    <property type="match status" value="1"/>
</dbReference>
<dbReference type="Pfam" id="PF06421">
    <property type="entry name" value="LepA_C"/>
    <property type="match status" value="1"/>
</dbReference>
<dbReference type="PRINTS" id="PR00315">
    <property type="entry name" value="ELONGATNFCT"/>
</dbReference>
<dbReference type="SMART" id="SM00838">
    <property type="entry name" value="EFG_C"/>
    <property type="match status" value="1"/>
</dbReference>
<dbReference type="SUPFAM" id="SSF54980">
    <property type="entry name" value="EF-G C-terminal domain-like"/>
    <property type="match status" value="2"/>
</dbReference>
<dbReference type="SUPFAM" id="SSF52540">
    <property type="entry name" value="P-loop containing nucleoside triphosphate hydrolases"/>
    <property type="match status" value="1"/>
</dbReference>
<dbReference type="SUPFAM" id="SSF50447">
    <property type="entry name" value="Translation proteins"/>
    <property type="match status" value="1"/>
</dbReference>
<dbReference type="PROSITE" id="PS00301">
    <property type="entry name" value="G_TR_1"/>
    <property type="match status" value="1"/>
</dbReference>
<dbReference type="PROSITE" id="PS51722">
    <property type="entry name" value="G_TR_2"/>
    <property type="match status" value="1"/>
</dbReference>
<organism>
    <name type="scientific">Paenarthrobacter aurescens (strain TC1)</name>
    <dbReference type="NCBI Taxonomy" id="290340"/>
    <lineage>
        <taxon>Bacteria</taxon>
        <taxon>Bacillati</taxon>
        <taxon>Actinomycetota</taxon>
        <taxon>Actinomycetes</taxon>
        <taxon>Micrococcales</taxon>
        <taxon>Micrococcaceae</taxon>
        <taxon>Paenarthrobacter</taxon>
    </lineage>
</organism>
<evidence type="ECO:0000255" key="1">
    <source>
        <dbReference type="HAMAP-Rule" id="MF_00071"/>
    </source>
</evidence>
<proteinExistence type="inferred from homology"/>
<gene>
    <name evidence="1" type="primary">lepA</name>
    <name type="ordered locus">AAur_2239</name>
</gene>
<sequence>MSPMARTAPVPAATDPAIIRNFCIIAHIDHGKSTLADRMLQYTGVVKQRDMKAQYLDRMDIERERGITIKSQAVRMPWELDGNSYALNMIDTPGHVDFTYEVSRSLAACEGAVLLVDAAQGIEAQTLANLYLAMENNLTIIPVLNKIDLPAAQPEKYAAELANLIGGDPEDVLKVSGKTGVGVEALLDKIVRDLPAPVGDPNAPARAMIFDSVYDTYRGVVTYVRVVDGMLHPRERIQMMSTRATHELLEIGVSSPEPTPSKGLGVGEVGYLITGVKDVRQSKVGDTVTNLAKPASESLSGYADAKPMVFSGLYPLDGTDYPVLRDALEKLMLNDAALVYEPETSAALGFGFRVGFLGLLHLEITRERLEREYNLDLISTAPNVEYEVTLEDKKVIHVTNPSEYPTGKISEVREPMVSATILAPNEFVGSIMELCQSRRGQMRGMDYLSEDRVELRYWIPLAEIVFDFFDLLKSKTRGYASLDWKADGEQVADLVKVDILLQGEQVDAFSAITHRDKAYAYGVMMTGKLRELIPRQQFEVPIQAAIGSRIIARESIRAIRKDVLAKCYGGDITRKRKLLEKQKEGKKRMKMVGRVEVPQEAFIAALTTDESKDKAKK</sequence>
<feature type="chain" id="PRO_1000031964" description="Elongation factor 4">
    <location>
        <begin position="1"/>
        <end position="617"/>
    </location>
</feature>
<feature type="domain" description="tr-type G">
    <location>
        <begin position="17"/>
        <end position="198"/>
    </location>
</feature>
<feature type="binding site" evidence="1">
    <location>
        <begin position="29"/>
        <end position="34"/>
    </location>
    <ligand>
        <name>GTP</name>
        <dbReference type="ChEBI" id="CHEBI:37565"/>
    </ligand>
</feature>
<feature type="binding site" evidence="1">
    <location>
        <begin position="145"/>
        <end position="148"/>
    </location>
    <ligand>
        <name>GTP</name>
        <dbReference type="ChEBI" id="CHEBI:37565"/>
    </ligand>
</feature>
<protein>
    <recommendedName>
        <fullName evidence="1">Elongation factor 4</fullName>
        <shortName evidence="1">EF-4</shortName>
        <ecNumber evidence="1">3.6.5.n1</ecNumber>
    </recommendedName>
    <alternativeName>
        <fullName evidence="1">Ribosomal back-translocase LepA</fullName>
    </alternativeName>
</protein>
<comment type="function">
    <text evidence="1">Required for accurate and efficient protein synthesis under certain stress conditions. May act as a fidelity factor of the translation reaction, by catalyzing a one-codon backward translocation of tRNAs on improperly translocated ribosomes. Back-translocation proceeds from a post-translocation (POST) complex to a pre-translocation (PRE) complex, thus giving elongation factor G a second chance to translocate the tRNAs correctly. Binds to ribosomes in a GTP-dependent manner.</text>
</comment>
<comment type="catalytic activity">
    <reaction evidence="1">
        <text>GTP + H2O = GDP + phosphate + H(+)</text>
        <dbReference type="Rhea" id="RHEA:19669"/>
        <dbReference type="ChEBI" id="CHEBI:15377"/>
        <dbReference type="ChEBI" id="CHEBI:15378"/>
        <dbReference type="ChEBI" id="CHEBI:37565"/>
        <dbReference type="ChEBI" id="CHEBI:43474"/>
        <dbReference type="ChEBI" id="CHEBI:58189"/>
        <dbReference type="EC" id="3.6.5.n1"/>
    </reaction>
</comment>
<comment type="subcellular location">
    <subcellularLocation>
        <location evidence="1">Cell membrane</location>
        <topology evidence="1">Peripheral membrane protein</topology>
        <orientation evidence="1">Cytoplasmic side</orientation>
    </subcellularLocation>
</comment>
<comment type="similarity">
    <text evidence="1">Belongs to the TRAFAC class translation factor GTPase superfamily. Classic translation factor GTPase family. LepA subfamily.</text>
</comment>